<name>OBG_MYCPN</name>
<organism>
    <name type="scientific">Mycoplasma pneumoniae (strain ATCC 29342 / M129 / Subtype 1)</name>
    <name type="common">Mycoplasmoides pneumoniae</name>
    <dbReference type="NCBI Taxonomy" id="272634"/>
    <lineage>
        <taxon>Bacteria</taxon>
        <taxon>Bacillati</taxon>
        <taxon>Mycoplasmatota</taxon>
        <taxon>Mycoplasmoidales</taxon>
        <taxon>Mycoplasmoidaceae</taxon>
        <taxon>Mycoplasmoides</taxon>
    </lineage>
</organism>
<gene>
    <name evidence="1" type="primary">obg</name>
    <name type="ordered locus">MPN_563</name>
    <name type="ORF">MP279</name>
</gene>
<keyword id="KW-0963">Cytoplasm</keyword>
<keyword id="KW-0342">GTP-binding</keyword>
<keyword id="KW-0378">Hydrolase</keyword>
<keyword id="KW-0460">Magnesium</keyword>
<keyword id="KW-0479">Metal-binding</keyword>
<keyword id="KW-0547">Nucleotide-binding</keyword>
<keyword id="KW-1185">Reference proteome</keyword>
<accession>P75215</accession>
<protein>
    <recommendedName>
        <fullName evidence="1">GTPase Obg</fullName>
        <ecNumber evidence="1">3.6.5.-</ecNumber>
    </recommendedName>
    <alternativeName>
        <fullName evidence="1">GTP-binding protein Obg</fullName>
    </alternativeName>
</protein>
<proteinExistence type="inferred from homology"/>
<comment type="function">
    <text evidence="1">An essential GTPase which binds GTP, GDP and possibly (p)ppGpp with moderate affinity, with high nucleotide exchange rates and a fairly low GTP hydrolysis rate. Plays a role in control of the cell cycle, stress response, ribosome biogenesis and in those bacteria that undergo differentiation, in morphogenesis control.</text>
</comment>
<comment type="cofactor">
    <cofactor evidence="1">
        <name>Mg(2+)</name>
        <dbReference type="ChEBI" id="CHEBI:18420"/>
    </cofactor>
</comment>
<comment type="subunit">
    <text evidence="1">Monomer.</text>
</comment>
<comment type="subcellular location">
    <subcellularLocation>
        <location evidence="1">Cytoplasm</location>
    </subcellularLocation>
</comment>
<comment type="similarity">
    <text evidence="1">Belongs to the TRAFAC class OBG-HflX-like GTPase superfamily. OBG GTPase family.</text>
</comment>
<evidence type="ECO:0000255" key="1">
    <source>
        <dbReference type="HAMAP-Rule" id="MF_01454"/>
    </source>
</evidence>
<evidence type="ECO:0000255" key="2">
    <source>
        <dbReference type="PROSITE-ProRule" id="PRU01229"/>
    </source>
</evidence>
<evidence type="ECO:0000255" key="3">
    <source>
        <dbReference type="PROSITE-ProRule" id="PRU01231"/>
    </source>
</evidence>
<feature type="chain" id="PRO_0000205442" description="GTPase Obg">
    <location>
        <begin position="1"/>
        <end position="433"/>
    </location>
</feature>
<feature type="domain" description="Obg" evidence="3">
    <location>
        <begin position="1"/>
        <end position="159"/>
    </location>
</feature>
<feature type="domain" description="OBG-type G" evidence="1">
    <location>
        <begin position="160"/>
        <end position="329"/>
    </location>
</feature>
<feature type="domain" description="OCT" evidence="2">
    <location>
        <begin position="355"/>
        <end position="433"/>
    </location>
</feature>
<feature type="binding site" evidence="1">
    <location>
        <begin position="166"/>
        <end position="173"/>
    </location>
    <ligand>
        <name>GTP</name>
        <dbReference type="ChEBI" id="CHEBI:37565"/>
    </ligand>
</feature>
<feature type="binding site" evidence="1">
    <location>
        <position position="173"/>
    </location>
    <ligand>
        <name>Mg(2+)</name>
        <dbReference type="ChEBI" id="CHEBI:18420"/>
    </ligand>
</feature>
<feature type="binding site" evidence="1">
    <location>
        <begin position="191"/>
        <end position="195"/>
    </location>
    <ligand>
        <name>GTP</name>
        <dbReference type="ChEBI" id="CHEBI:37565"/>
    </ligand>
</feature>
<feature type="binding site" evidence="1">
    <location>
        <position position="193"/>
    </location>
    <ligand>
        <name>Mg(2+)</name>
        <dbReference type="ChEBI" id="CHEBI:18420"/>
    </ligand>
</feature>
<feature type="binding site" evidence="1">
    <location>
        <begin position="212"/>
        <end position="215"/>
    </location>
    <ligand>
        <name>GTP</name>
        <dbReference type="ChEBI" id="CHEBI:37565"/>
    </ligand>
</feature>
<feature type="binding site" evidence="1">
    <location>
        <begin position="282"/>
        <end position="285"/>
    </location>
    <ligand>
        <name>GTP</name>
        <dbReference type="ChEBI" id="CHEBI:37565"/>
    </ligand>
</feature>
<feature type="binding site" evidence="1">
    <location>
        <begin position="310"/>
        <end position="312"/>
    </location>
    <ligand>
        <name>GTP</name>
        <dbReference type="ChEBI" id="CHEBI:37565"/>
    </ligand>
</feature>
<dbReference type="EC" id="3.6.5.-" evidence="1"/>
<dbReference type="EMBL" id="U00089">
    <property type="protein sequence ID" value="AAB95927.1"/>
    <property type="molecule type" value="Genomic_DNA"/>
</dbReference>
<dbReference type="PIR" id="S73605">
    <property type="entry name" value="S73605"/>
</dbReference>
<dbReference type="RefSeq" id="NP_110252.1">
    <property type="nucleotide sequence ID" value="NC_000912.1"/>
</dbReference>
<dbReference type="SMR" id="P75215"/>
<dbReference type="IntAct" id="P75215">
    <property type="interactions" value="4"/>
</dbReference>
<dbReference type="STRING" id="272634.MPN_563"/>
<dbReference type="EnsemblBacteria" id="AAB95927">
    <property type="protein sequence ID" value="AAB95927"/>
    <property type="gene ID" value="MPN_563"/>
</dbReference>
<dbReference type="KEGG" id="mpn:MPN_563"/>
<dbReference type="PATRIC" id="fig|272634.6.peg.625"/>
<dbReference type="HOGENOM" id="CLU_011747_2_1_14"/>
<dbReference type="OrthoDB" id="9807318at2"/>
<dbReference type="BioCyc" id="MPNE272634:G1GJ3-923-MONOMER"/>
<dbReference type="Proteomes" id="UP000000808">
    <property type="component" value="Chromosome"/>
</dbReference>
<dbReference type="GO" id="GO:0005737">
    <property type="term" value="C:cytoplasm"/>
    <property type="evidence" value="ECO:0007669"/>
    <property type="project" value="UniProtKB-SubCell"/>
</dbReference>
<dbReference type="GO" id="GO:0005525">
    <property type="term" value="F:GTP binding"/>
    <property type="evidence" value="ECO:0007669"/>
    <property type="project" value="UniProtKB-UniRule"/>
</dbReference>
<dbReference type="GO" id="GO:0003924">
    <property type="term" value="F:GTPase activity"/>
    <property type="evidence" value="ECO:0007669"/>
    <property type="project" value="UniProtKB-UniRule"/>
</dbReference>
<dbReference type="GO" id="GO:0000287">
    <property type="term" value="F:magnesium ion binding"/>
    <property type="evidence" value="ECO:0007669"/>
    <property type="project" value="InterPro"/>
</dbReference>
<dbReference type="GO" id="GO:0042254">
    <property type="term" value="P:ribosome biogenesis"/>
    <property type="evidence" value="ECO:0007669"/>
    <property type="project" value="UniProtKB-UniRule"/>
</dbReference>
<dbReference type="CDD" id="cd01898">
    <property type="entry name" value="Obg"/>
    <property type="match status" value="1"/>
</dbReference>
<dbReference type="FunFam" id="2.70.210.12:FF:000001">
    <property type="entry name" value="GTPase Obg"/>
    <property type="match status" value="1"/>
</dbReference>
<dbReference type="Gene3D" id="3.30.300.350">
    <property type="entry name" value="GTP-binding protein OBG, C-terminal domain"/>
    <property type="match status" value="1"/>
</dbReference>
<dbReference type="Gene3D" id="2.70.210.12">
    <property type="entry name" value="GTP1/OBG domain"/>
    <property type="match status" value="1"/>
</dbReference>
<dbReference type="Gene3D" id="3.40.50.300">
    <property type="entry name" value="P-loop containing nucleotide triphosphate hydrolases"/>
    <property type="match status" value="1"/>
</dbReference>
<dbReference type="HAMAP" id="MF_01454">
    <property type="entry name" value="GTPase_Obg"/>
    <property type="match status" value="1"/>
</dbReference>
<dbReference type="InterPro" id="IPR031167">
    <property type="entry name" value="G_OBG"/>
</dbReference>
<dbReference type="InterPro" id="IPR006073">
    <property type="entry name" value="GTP-bd"/>
</dbReference>
<dbReference type="InterPro" id="IPR014100">
    <property type="entry name" value="GTP-bd_Obg/CgtA"/>
</dbReference>
<dbReference type="InterPro" id="IPR036346">
    <property type="entry name" value="GTP-bd_prot_GTP1/OBG_C_sf"/>
</dbReference>
<dbReference type="InterPro" id="IPR006074">
    <property type="entry name" value="GTP1-OBG_CS"/>
</dbReference>
<dbReference type="InterPro" id="IPR006169">
    <property type="entry name" value="GTP1_OBG_dom"/>
</dbReference>
<dbReference type="InterPro" id="IPR036726">
    <property type="entry name" value="GTP1_OBG_dom_sf"/>
</dbReference>
<dbReference type="InterPro" id="IPR045086">
    <property type="entry name" value="OBG_GTPase"/>
</dbReference>
<dbReference type="InterPro" id="IPR015349">
    <property type="entry name" value="OCT_dom"/>
</dbReference>
<dbReference type="InterPro" id="IPR027417">
    <property type="entry name" value="P-loop_NTPase"/>
</dbReference>
<dbReference type="NCBIfam" id="TIGR02729">
    <property type="entry name" value="Obg_CgtA"/>
    <property type="match status" value="1"/>
</dbReference>
<dbReference type="NCBIfam" id="TIGR03595">
    <property type="entry name" value="Obg_CgtA_exten"/>
    <property type="match status" value="1"/>
</dbReference>
<dbReference type="NCBIfam" id="NF008955">
    <property type="entry name" value="PRK12297.1"/>
    <property type="match status" value="1"/>
</dbReference>
<dbReference type="NCBIfam" id="NF008956">
    <property type="entry name" value="PRK12299.1"/>
    <property type="match status" value="1"/>
</dbReference>
<dbReference type="PANTHER" id="PTHR11702">
    <property type="entry name" value="DEVELOPMENTALLY REGULATED GTP-BINDING PROTEIN-RELATED"/>
    <property type="match status" value="1"/>
</dbReference>
<dbReference type="PANTHER" id="PTHR11702:SF31">
    <property type="entry name" value="MITOCHONDRIAL RIBOSOME-ASSOCIATED GTPASE 2"/>
    <property type="match status" value="1"/>
</dbReference>
<dbReference type="Pfam" id="PF09269">
    <property type="entry name" value="DUF1967"/>
    <property type="match status" value="1"/>
</dbReference>
<dbReference type="Pfam" id="PF01018">
    <property type="entry name" value="GTP1_OBG"/>
    <property type="match status" value="1"/>
</dbReference>
<dbReference type="Pfam" id="PF01926">
    <property type="entry name" value="MMR_HSR1"/>
    <property type="match status" value="1"/>
</dbReference>
<dbReference type="PIRSF" id="PIRSF002401">
    <property type="entry name" value="GTP_bd_Obg/CgtA"/>
    <property type="match status" value="1"/>
</dbReference>
<dbReference type="PRINTS" id="PR00326">
    <property type="entry name" value="GTP1OBG"/>
</dbReference>
<dbReference type="SUPFAM" id="SSF102741">
    <property type="entry name" value="Obg GTP-binding protein C-terminal domain"/>
    <property type="match status" value="1"/>
</dbReference>
<dbReference type="SUPFAM" id="SSF82051">
    <property type="entry name" value="Obg GTP-binding protein N-terminal domain"/>
    <property type="match status" value="1"/>
</dbReference>
<dbReference type="SUPFAM" id="SSF52540">
    <property type="entry name" value="P-loop containing nucleoside triphosphate hydrolases"/>
    <property type="match status" value="1"/>
</dbReference>
<dbReference type="PROSITE" id="PS51710">
    <property type="entry name" value="G_OBG"/>
    <property type="match status" value="1"/>
</dbReference>
<dbReference type="PROSITE" id="PS00905">
    <property type="entry name" value="GTP1_OBG"/>
    <property type="match status" value="1"/>
</dbReference>
<dbReference type="PROSITE" id="PS51883">
    <property type="entry name" value="OBG"/>
    <property type="match status" value="1"/>
</dbReference>
<dbReference type="PROSITE" id="PS51881">
    <property type="entry name" value="OCT"/>
    <property type="match status" value="1"/>
</dbReference>
<reference key="1">
    <citation type="journal article" date="1996" name="Nucleic Acids Res.">
        <title>Complete sequence analysis of the genome of the bacterium Mycoplasma pneumoniae.</title>
        <authorList>
            <person name="Himmelreich R."/>
            <person name="Hilbert H."/>
            <person name="Plagens H."/>
            <person name="Pirkl E."/>
            <person name="Li B.-C."/>
            <person name="Herrmann R."/>
        </authorList>
    </citation>
    <scope>NUCLEOTIDE SEQUENCE [LARGE SCALE GENOMIC DNA]</scope>
    <source>
        <strain>ATCC 29342 / M129 / Subtype 1</strain>
    </source>
</reference>
<sequence>MGLTDYCECRFSAGNGGNGIIAWRREAHYDKGGPGGGNGGNGGNVVLQADHNCDSLFFLKNKKHLFAESGGNGKPDLAHGKNGEDLVIKVPVGTTVRDLDTNQILMDFVHDQQSFILCYGGKGGKGNAAFKSPIMRAPNLYENGDKGQSLHVSLEIKYLANVGIVGFPNTGKSTLISKLSNAKPKIANYRFTTLVPVLGVVKHNDQSLVFADIPGLIENASEGSGLGHYFLRHIERCEILIHLISLDPVDHDDPCQAYEQIMRELSKYSQLLVKKKMLVVANKTDVDLDGTRFQKLAQYLENKGIPLFKISALKQELGDLVAQVFALHQKTLAQFGANKFHLPMEMEKHYVFEQASETDHDPLNIERDALGRWHVECKRLHYWFDKIPQTTLDNIRRLGNKIKEVGIEDQLKVAGAKKGDVIVFAGQEFVIND</sequence>